<reference key="1">
    <citation type="submission" date="2006-10" db="EMBL/GenBank/DDBJ databases">
        <authorList>
            <consortium name="NIH - Xenopus Gene Collection (XGC) project"/>
        </authorList>
    </citation>
    <scope>NUCLEOTIDE SEQUENCE [LARGE SCALE MRNA]</scope>
    <source>
        <tissue>Embryo</tissue>
    </source>
</reference>
<accession>Q08AZ1</accession>
<comment type="function">
    <text evidence="1">RNA-binding protein involved in the biogenesis of circular RNAs (circRNAs), which are produced by back-splicing circularization of pre-mRNAs. Acts by binding to both exon-intron boundary and 3'-UTR of pre-mRNAs to promote circRNA biogenesis through dimerization and the association with the spliceosome. Also binds the poly(A) tail of mRNAs; controlling poly(A) length.</text>
</comment>
<comment type="subunit">
    <text evidence="1">Homodimer; facilitating circular RNAs (circRNAs) formation.</text>
</comment>
<comment type="subcellular location">
    <subcellularLocation>
        <location evidence="1">Nucleus speckle</location>
    </subcellularLocation>
</comment>
<comment type="similarity">
    <text evidence="4">Belongs to the ZC3H14 family.</text>
</comment>
<comment type="sequence caution" evidence="4">
    <conflict type="erroneous initiation">
        <sequence resource="EMBL-CDS" id="AAI24948"/>
    </conflict>
    <text>Truncated N-terminus.</text>
</comment>
<keyword id="KW-0479">Metal-binding</keyword>
<keyword id="KW-0539">Nucleus</keyword>
<keyword id="KW-1185">Reference proteome</keyword>
<keyword id="KW-0677">Repeat</keyword>
<keyword id="KW-0694">RNA-binding</keyword>
<keyword id="KW-0862">Zinc</keyword>
<keyword id="KW-0863">Zinc-finger</keyword>
<evidence type="ECO:0000250" key="1">
    <source>
        <dbReference type="UniProtKB" id="Q6PJT7"/>
    </source>
</evidence>
<evidence type="ECO:0000255" key="2">
    <source>
        <dbReference type="PROSITE-ProRule" id="PRU00723"/>
    </source>
</evidence>
<evidence type="ECO:0000256" key="3">
    <source>
        <dbReference type="SAM" id="MobiDB-lite"/>
    </source>
</evidence>
<evidence type="ECO:0000305" key="4"/>
<protein>
    <recommendedName>
        <fullName>Zinc finger CCCH domain-containing protein 14</fullName>
    </recommendedName>
</protein>
<gene>
    <name type="primary">zc3h14</name>
</gene>
<dbReference type="EMBL" id="BC124947">
    <property type="protein sequence ID" value="AAI24948.1"/>
    <property type="status" value="ALT_INIT"/>
    <property type="molecule type" value="mRNA"/>
</dbReference>
<dbReference type="RefSeq" id="NP_001121296.1">
    <property type="nucleotide sequence ID" value="NM_001127824.1"/>
</dbReference>
<dbReference type="RefSeq" id="XP_018087282.1">
    <property type="nucleotide sequence ID" value="XM_018231793.1"/>
</dbReference>
<dbReference type="BioGRID" id="932700">
    <property type="interactions" value="1"/>
</dbReference>
<dbReference type="IntAct" id="Q08AZ1">
    <property type="interactions" value="1"/>
</dbReference>
<dbReference type="DNASU" id="100158380"/>
<dbReference type="GeneID" id="100158380"/>
<dbReference type="KEGG" id="xla:100158380"/>
<dbReference type="AGR" id="Xenbase:XB-GENE-983051"/>
<dbReference type="CTD" id="100158380"/>
<dbReference type="Xenbase" id="XB-GENE-983051">
    <property type="gene designation" value="zc3h14.S"/>
</dbReference>
<dbReference type="OMA" id="FCEYYHP"/>
<dbReference type="OrthoDB" id="5589010at2759"/>
<dbReference type="Proteomes" id="UP000186698">
    <property type="component" value="Chromosome 8S"/>
</dbReference>
<dbReference type="Bgee" id="100158380">
    <property type="expression patterns" value="Expressed in egg cell and 19 other cell types or tissues"/>
</dbReference>
<dbReference type="GO" id="GO:0005737">
    <property type="term" value="C:cytoplasm"/>
    <property type="evidence" value="ECO:0000318"/>
    <property type="project" value="GO_Central"/>
</dbReference>
<dbReference type="GO" id="GO:0016607">
    <property type="term" value="C:nuclear speck"/>
    <property type="evidence" value="ECO:0000250"/>
    <property type="project" value="UniProtKB"/>
</dbReference>
<dbReference type="GO" id="GO:0005634">
    <property type="term" value="C:nucleus"/>
    <property type="evidence" value="ECO:0000250"/>
    <property type="project" value="UniProtKB"/>
</dbReference>
<dbReference type="GO" id="GO:0008143">
    <property type="term" value="F:poly(A) binding"/>
    <property type="evidence" value="ECO:0000250"/>
    <property type="project" value="UniProtKB"/>
</dbReference>
<dbReference type="GO" id="GO:0036002">
    <property type="term" value="F:pre-mRNA binding"/>
    <property type="evidence" value="ECO:0000250"/>
    <property type="project" value="UniProtKB"/>
</dbReference>
<dbReference type="GO" id="GO:0008270">
    <property type="term" value="F:zinc ion binding"/>
    <property type="evidence" value="ECO:0007669"/>
    <property type="project" value="UniProtKB-KW"/>
</dbReference>
<dbReference type="GO" id="GO:0048255">
    <property type="term" value="P:mRNA stabilization"/>
    <property type="evidence" value="ECO:0000250"/>
    <property type="project" value="UniProtKB"/>
</dbReference>
<dbReference type="GO" id="GO:0043488">
    <property type="term" value="P:regulation of mRNA stability"/>
    <property type="evidence" value="ECO:0000318"/>
    <property type="project" value="GO_Central"/>
</dbReference>
<dbReference type="FunFam" id="4.10.1000.30:FF:000001">
    <property type="entry name" value="Zinc finger CCCH domain-containing protein 14"/>
    <property type="match status" value="1"/>
</dbReference>
<dbReference type="FunFam" id="4.10.1000.40:FF:000006">
    <property type="entry name" value="Zinc finger CCCH domain-containing protein 14"/>
    <property type="match status" value="1"/>
</dbReference>
<dbReference type="Gene3D" id="4.10.1000.30">
    <property type="match status" value="1"/>
</dbReference>
<dbReference type="Gene3D" id="4.10.1000.40">
    <property type="match status" value="1"/>
</dbReference>
<dbReference type="InterPro" id="IPR040366">
    <property type="entry name" value="Nab2/ZC3H14"/>
</dbReference>
<dbReference type="InterPro" id="IPR000571">
    <property type="entry name" value="Znf_CCCH"/>
</dbReference>
<dbReference type="PANTHER" id="PTHR14738">
    <property type="entry name" value="ZINC FINGER CCCH DOMAIN-CONTAINING PROTEIN 14"/>
    <property type="match status" value="1"/>
</dbReference>
<dbReference type="PANTHER" id="PTHR14738:SF29">
    <property type="entry name" value="ZINC FINGER CCCH DOMAIN-CONTAINING PROTEIN 14"/>
    <property type="match status" value="1"/>
</dbReference>
<dbReference type="Pfam" id="PF14608">
    <property type="entry name" value="zf-CCCH_2"/>
    <property type="match status" value="5"/>
</dbReference>
<dbReference type="SMART" id="SM00356">
    <property type="entry name" value="ZnF_C3H1"/>
    <property type="match status" value="3"/>
</dbReference>
<dbReference type="PROSITE" id="PS50103">
    <property type="entry name" value="ZF_C3H1"/>
    <property type="match status" value="3"/>
</dbReference>
<sequence>MTAIKGKLQELGAYVDEELPDYIMVMVANKKSQKQMTDDLSLFLGSNTTRFTTWLQGVLDKLRSVTPESNSMKTSDAIIFESSMPSLKSLSNSRDDLAKDVPTLTVSSTRHGRYDSSTSSHVQATGSSGSVARLTSAVKPLREFSPSEAVIDIKLDLDDPFNEDLSLATEIANLSRKRTALSASYRTLRPTAEVYRPPGIGQHAYHTNENNSSLHRFPQSSFVSGRSLKLQSSMTVGSSRIQDVSDLSETYKTAFRLASEKSLREEETSRKRRLPVASSVVKVKKLITDEEEVEEEGEEDEEGTDCIFRTAGISSSVSVPAKPERRPSLPPTKQANKNLILKAISEAQDCISKTTNYSTAAPQKQTVPVIPRSRLLPEEEQLMLLQNRSSLLNYPSHLQELQHQAMPEPLHKLDLLSRLQPNLEEEIELPNPVNSEEAEILRPLDSRSFILKRPKLSKEPSPQIQNNSVSPPCPAQPLPGRMIQPREAPTYEKPASPKFIVTLDGVPSPPGYISDQEVDESMCYTEQGETCVEQLGVVARPEQNYPMQLVTEPLCTNDVVMENTSSGTKEKIRERCKYWPACKNADSCAYHHPTSPCKSFPNCRFADKCFFIHPNCKYDAKCKKADCPFTHASKRFPVPPVKPVSTTSSSHPSSQPCRYFPACKKTDCSFYHPKHCRFNTQCTRPDCKFYHPAVSVPARHTLKWTRAQASD</sequence>
<organism>
    <name type="scientific">Xenopus laevis</name>
    <name type="common">African clawed frog</name>
    <dbReference type="NCBI Taxonomy" id="8355"/>
    <lineage>
        <taxon>Eukaryota</taxon>
        <taxon>Metazoa</taxon>
        <taxon>Chordata</taxon>
        <taxon>Craniata</taxon>
        <taxon>Vertebrata</taxon>
        <taxon>Euteleostomi</taxon>
        <taxon>Amphibia</taxon>
        <taxon>Batrachia</taxon>
        <taxon>Anura</taxon>
        <taxon>Pipoidea</taxon>
        <taxon>Pipidae</taxon>
        <taxon>Xenopodinae</taxon>
        <taxon>Xenopus</taxon>
        <taxon>Xenopus</taxon>
    </lineage>
</organism>
<proteinExistence type="evidence at transcript level"/>
<name>ZC3HE_XENLA</name>
<feature type="chain" id="PRO_0000331317" description="Zinc finger CCCH domain-containing protein 14">
    <location>
        <begin position="1"/>
        <end position="711"/>
    </location>
</feature>
<feature type="zinc finger region" description="C3H1-type 1" evidence="2">
    <location>
        <begin position="570"/>
        <end position="595"/>
    </location>
</feature>
<feature type="zinc finger region" description="C3H1-type 2" evidence="2">
    <location>
        <begin position="596"/>
        <end position="615"/>
    </location>
</feature>
<feature type="zinc finger region" description="C3H1-type 3" evidence="2">
    <location>
        <begin position="616"/>
        <end position="631"/>
    </location>
</feature>
<feature type="zinc finger region" description="C3H1-type 4" evidence="2">
    <location>
        <begin position="657"/>
        <end position="674"/>
    </location>
</feature>
<feature type="zinc finger region" description="C3H1-type 5" evidence="2">
    <location>
        <begin position="676"/>
        <end position="694"/>
    </location>
</feature>
<feature type="region of interest" description="Disordered" evidence="3">
    <location>
        <begin position="108"/>
        <end position="127"/>
    </location>
</feature>
<feature type="region of interest" description="Disordered" evidence="3">
    <location>
        <begin position="457"/>
        <end position="478"/>
    </location>
</feature>
<feature type="compositionally biased region" description="Polar residues" evidence="3">
    <location>
        <begin position="460"/>
        <end position="470"/>
    </location>
</feature>